<keyword id="KW-0963">Cytoplasm</keyword>
<sequence>MTDFTPDAILDATGLNCPEPVMMLHQHVRNLAAGGLLKVIATDPSTRRDIPKFCNFLGHELLQQQEDAGTFLYWIRKKAD</sequence>
<evidence type="ECO:0000255" key="1">
    <source>
        <dbReference type="HAMAP-Rule" id="MF_00413"/>
    </source>
</evidence>
<comment type="function">
    <text evidence="1">Sulfur carrier protein which probably makes part of a sulfur-relay system.</text>
</comment>
<comment type="subcellular location">
    <subcellularLocation>
        <location evidence="1">Cytoplasm</location>
    </subcellularLocation>
</comment>
<comment type="similarity">
    <text evidence="1">Belongs to the sulfur carrier protein TusA family.</text>
</comment>
<reference key="1">
    <citation type="submission" date="2007-05" db="EMBL/GenBank/DDBJ databases">
        <title>Complete sequence of Pseudomonas putida F1.</title>
        <authorList>
            <consortium name="US DOE Joint Genome Institute"/>
            <person name="Copeland A."/>
            <person name="Lucas S."/>
            <person name="Lapidus A."/>
            <person name="Barry K."/>
            <person name="Detter J.C."/>
            <person name="Glavina del Rio T."/>
            <person name="Hammon N."/>
            <person name="Israni S."/>
            <person name="Dalin E."/>
            <person name="Tice H."/>
            <person name="Pitluck S."/>
            <person name="Chain P."/>
            <person name="Malfatti S."/>
            <person name="Shin M."/>
            <person name="Vergez L."/>
            <person name="Schmutz J."/>
            <person name="Larimer F."/>
            <person name="Land M."/>
            <person name="Hauser L."/>
            <person name="Kyrpides N."/>
            <person name="Lykidis A."/>
            <person name="Parales R."/>
            <person name="Richardson P."/>
        </authorList>
    </citation>
    <scope>NUCLEOTIDE SEQUENCE [LARGE SCALE GENOMIC DNA]</scope>
    <source>
        <strain>ATCC 700007 / DSM 6899 / JCM 31910 / BCRC 17059 / LMG 24140 / F1</strain>
    </source>
</reference>
<gene>
    <name evidence="1" type="primary">tusA</name>
    <name type="ordered locus">Pput_3625</name>
</gene>
<protein>
    <recommendedName>
        <fullName evidence="1">Sulfur carrier protein TusA</fullName>
    </recommendedName>
</protein>
<name>TUSA_PSEP1</name>
<feature type="chain" id="PRO_1000050021" description="Sulfur carrier protein TusA">
    <location>
        <begin position="1"/>
        <end position="80"/>
    </location>
</feature>
<feature type="active site" description="Cysteine persulfide intermediate" evidence="1">
    <location>
        <position position="17"/>
    </location>
</feature>
<dbReference type="EMBL" id="CP000712">
    <property type="protein sequence ID" value="ABQ79749.1"/>
    <property type="molecule type" value="Genomic_DNA"/>
</dbReference>
<dbReference type="SMR" id="A5W6I9"/>
<dbReference type="KEGG" id="ppf:Pput_3625"/>
<dbReference type="eggNOG" id="COG0425">
    <property type="taxonomic scope" value="Bacteria"/>
</dbReference>
<dbReference type="HOGENOM" id="CLU_165255_5_1_6"/>
<dbReference type="GO" id="GO:0005737">
    <property type="term" value="C:cytoplasm"/>
    <property type="evidence" value="ECO:0007669"/>
    <property type="project" value="UniProtKB-SubCell"/>
</dbReference>
<dbReference type="GO" id="GO:0097163">
    <property type="term" value="F:sulfur carrier activity"/>
    <property type="evidence" value="ECO:0007669"/>
    <property type="project" value="UniProtKB-UniRule"/>
</dbReference>
<dbReference type="GO" id="GO:0002143">
    <property type="term" value="P:tRNA wobble position uridine thiolation"/>
    <property type="evidence" value="ECO:0007669"/>
    <property type="project" value="InterPro"/>
</dbReference>
<dbReference type="CDD" id="cd03423">
    <property type="entry name" value="SirA"/>
    <property type="match status" value="1"/>
</dbReference>
<dbReference type="Gene3D" id="3.30.110.40">
    <property type="entry name" value="TusA-like domain"/>
    <property type="match status" value="1"/>
</dbReference>
<dbReference type="HAMAP" id="MF_00413">
    <property type="entry name" value="Thiourid_synth_A"/>
    <property type="match status" value="1"/>
</dbReference>
<dbReference type="InterPro" id="IPR022931">
    <property type="entry name" value="Sulphur_carrier_TusA"/>
</dbReference>
<dbReference type="InterPro" id="IPR001455">
    <property type="entry name" value="TusA-like"/>
</dbReference>
<dbReference type="InterPro" id="IPR036868">
    <property type="entry name" value="TusA-like_sf"/>
</dbReference>
<dbReference type="NCBIfam" id="NF001423">
    <property type="entry name" value="PRK00299.1"/>
    <property type="match status" value="1"/>
</dbReference>
<dbReference type="PANTHER" id="PTHR33279:SF2">
    <property type="entry name" value="SULFUR CARRIER PROTEIN TUSA"/>
    <property type="match status" value="1"/>
</dbReference>
<dbReference type="PANTHER" id="PTHR33279">
    <property type="entry name" value="SULFUR CARRIER PROTEIN YEDF-RELATED"/>
    <property type="match status" value="1"/>
</dbReference>
<dbReference type="Pfam" id="PF01206">
    <property type="entry name" value="TusA"/>
    <property type="match status" value="1"/>
</dbReference>
<dbReference type="SUPFAM" id="SSF64307">
    <property type="entry name" value="SirA-like"/>
    <property type="match status" value="1"/>
</dbReference>
<dbReference type="PROSITE" id="PS01148">
    <property type="entry name" value="UPF0033"/>
    <property type="match status" value="1"/>
</dbReference>
<organism>
    <name type="scientific">Pseudomonas putida (strain ATCC 700007 / DSM 6899 / JCM 31910 / BCRC 17059 / LMG 24140 / F1)</name>
    <dbReference type="NCBI Taxonomy" id="351746"/>
    <lineage>
        <taxon>Bacteria</taxon>
        <taxon>Pseudomonadati</taxon>
        <taxon>Pseudomonadota</taxon>
        <taxon>Gammaproteobacteria</taxon>
        <taxon>Pseudomonadales</taxon>
        <taxon>Pseudomonadaceae</taxon>
        <taxon>Pseudomonas</taxon>
    </lineage>
</organism>
<accession>A5W6I9</accession>
<proteinExistence type="inferred from homology"/>